<reference key="1">
    <citation type="journal article" date="2007" name="J. Bacteriol.">
        <title>Genome of the opportunistic pathogen Streptococcus sanguinis.</title>
        <authorList>
            <person name="Xu P."/>
            <person name="Alves J.M."/>
            <person name="Kitten T."/>
            <person name="Brown A."/>
            <person name="Chen Z."/>
            <person name="Ozaki L.S."/>
            <person name="Manque P."/>
            <person name="Ge X."/>
            <person name="Serrano M.G."/>
            <person name="Puiu D."/>
            <person name="Hendricks S."/>
            <person name="Wang Y."/>
            <person name="Chaplin M.D."/>
            <person name="Akan D."/>
            <person name="Paik S."/>
            <person name="Peterson D.L."/>
            <person name="Macrina F.L."/>
            <person name="Buck G.A."/>
        </authorList>
    </citation>
    <scope>NUCLEOTIDE SEQUENCE [LARGE SCALE GENOMIC DNA]</scope>
    <source>
        <strain>SK36</strain>
    </source>
</reference>
<keyword id="KW-0131">Cell cycle</keyword>
<keyword id="KW-0132">Cell division</keyword>
<keyword id="KW-1003">Cell membrane</keyword>
<keyword id="KW-0133">Cell shape</keyword>
<keyword id="KW-0961">Cell wall biogenesis/degradation</keyword>
<keyword id="KW-0460">Magnesium</keyword>
<keyword id="KW-0472">Membrane</keyword>
<keyword id="KW-0479">Metal-binding</keyword>
<keyword id="KW-0573">Peptidoglycan synthesis</keyword>
<keyword id="KW-1185">Reference proteome</keyword>
<keyword id="KW-0808">Transferase</keyword>
<keyword id="KW-0812">Transmembrane</keyword>
<keyword id="KW-1133">Transmembrane helix</keyword>
<comment type="function">
    <text evidence="1">Catalyzes the initial step of the lipid cycle reactions in the biosynthesis of the cell wall peptidoglycan: transfers peptidoglycan precursor phospho-MurNAc-pentapeptide from UDP-MurNAc-pentapeptide onto the lipid carrier undecaprenyl phosphate, yielding undecaprenyl-pyrophosphoryl-MurNAc-pentapeptide, known as lipid I.</text>
</comment>
<comment type="catalytic activity">
    <reaction evidence="1">
        <text>UDP-N-acetyl-alpha-D-muramoyl-L-alanyl-gamma-D-glutamyl-L-lysyl-D-alanyl-D-alanine + di-trans,octa-cis-undecaprenyl phosphate = Mur2Ac(oyl-L-Ala-gamma-D-Glu-L-Lys-D-Ala-D-Ala)-di-trans,octa-cis-undecaprenyl diphosphate + UMP</text>
        <dbReference type="Rhea" id="RHEA:21920"/>
        <dbReference type="ChEBI" id="CHEBI:57865"/>
        <dbReference type="ChEBI" id="CHEBI:60032"/>
        <dbReference type="ChEBI" id="CHEBI:60392"/>
        <dbReference type="ChEBI" id="CHEBI:70758"/>
        <dbReference type="EC" id="2.7.8.13"/>
    </reaction>
</comment>
<comment type="cofactor">
    <cofactor evidence="1">
        <name>Mg(2+)</name>
        <dbReference type="ChEBI" id="CHEBI:18420"/>
    </cofactor>
</comment>
<comment type="pathway">
    <text evidence="1">Cell wall biogenesis; peptidoglycan biosynthesis.</text>
</comment>
<comment type="subcellular location">
    <subcellularLocation>
        <location evidence="1">Cell membrane</location>
        <topology evidence="1">Multi-pass membrane protein</topology>
    </subcellularLocation>
</comment>
<comment type="similarity">
    <text evidence="1">Belongs to the glycosyltransferase 4 family. MraY subfamily.</text>
</comment>
<dbReference type="EC" id="2.7.8.13" evidence="1"/>
<dbReference type="EMBL" id="CP000387">
    <property type="protein sequence ID" value="ABN45251.1"/>
    <property type="molecule type" value="Genomic_DNA"/>
</dbReference>
<dbReference type="RefSeq" id="WP_002914280.1">
    <property type="nucleotide sequence ID" value="NC_009009.1"/>
</dbReference>
<dbReference type="RefSeq" id="YP_001035801.1">
    <property type="nucleotide sequence ID" value="NC_009009.1"/>
</dbReference>
<dbReference type="SMR" id="A3CPZ6"/>
<dbReference type="STRING" id="388919.SSA_1870"/>
<dbReference type="GeneID" id="48426209"/>
<dbReference type="KEGG" id="ssa:SSA_1870"/>
<dbReference type="PATRIC" id="fig|388919.9.peg.1775"/>
<dbReference type="eggNOG" id="COG0472">
    <property type="taxonomic scope" value="Bacteria"/>
</dbReference>
<dbReference type="HOGENOM" id="CLU_023982_0_1_9"/>
<dbReference type="OrthoDB" id="9805475at2"/>
<dbReference type="UniPathway" id="UPA00219"/>
<dbReference type="Proteomes" id="UP000002148">
    <property type="component" value="Chromosome"/>
</dbReference>
<dbReference type="GO" id="GO:0005886">
    <property type="term" value="C:plasma membrane"/>
    <property type="evidence" value="ECO:0007669"/>
    <property type="project" value="UniProtKB-SubCell"/>
</dbReference>
<dbReference type="GO" id="GO:0046872">
    <property type="term" value="F:metal ion binding"/>
    <property type="evidence" value="ECO:0007669"/>
    <property type="project" value="UniProtKB-KW"/>
</dbReference>
<dbReference type="GO" id="GO:0008963">
    <property type="term" value="F:phospho-N-acetylmuramoyl-pentapeptide-transferase activity"/>
    <property type="evidence" value="ECO:0007669"/>
    <property type="project" value="UniProtKB-UniRule"/>
</dbReference>
<dbReference type="GO" id="GO:0051301">
    <property type="term" value="P:cell division"/>
    <property type="evidence" value="ECO:0007669"/>
    <property type="project" value="UniProtKB-KW"/>
</dbReference>
<dbReference type="GO" id="GO:0071555">
    <property type="term" value="P:cell wall organization"/>
    <property type="evidence" value="ECO:0007669"/>
    <property type="project" value="UniProtKB-KW"/>
</dbReference>
<dbReference type="GO" id="GO:0009252">
    <property type="term" value="P:peptidoglycan biosynthetic process"/>
    <property type="evidence" value="ECO:0007669"/>
    <property type="project" value="UniProtKB-UniRule"/>
</dbReference>
<dbReference type="GO" id="GO:0008360">
    <property type="term" value="P:regulation of cell shape"/>
    <property type="evidence" value="ECO:0007669"/>
    <property type="project" value="UniProtKB-KW"/>
</dbReference>
<dbReference type="CDD" id="cd06852">
    <property type="entry name" value="GT_MraY"/>
    <property type="match status" value="1"/>
</dbReference>
<dbReference type="HAMAP" id="MF_00038">
    <property type="entry name" value="MraY"/>
    <property type="match status" value="1"/>
</dbReference>
<dbReference type="InterPro" id="IPR000715">
    <property type="entry name" value="Glycosyl_transferase_4"/>
</dbReference>
<dbReference type="InterPro" id="IPR003524">
    <property type="entry name" value="PNAcMuramoyl-5peptid_Trfase"/>
</dbReference>
<dbReference type="InterPro" id="IPR018480">
    <property type="entry name" value="PNAcMuramoyl-5peptid_Trfase_CS"/>
</dbReference>
<dbReference type="NCBIfam" id="TIGR00445">
    <property type="entry name" value="mraY"/>
    <property type="match status" value="1"/>
</dbReference>
<dbReference type="PANTHER" id="PTHR22926">
    <property type="entry name" value="PHOSPHO-N-ACETYLMURAMOYL-PENTAPEPTIDE-TRANSFERASE"/>
    <property type="match status" value="1"/>
</dbReference>
<dbReference type="PANTHER" id="PTHR22926:SF5">
    <property type="entry name" value="PHOSPHO-N-ACETYLMURAMOYL-PENTAPEPTIDE-TRANSFERASE HOMOLOG"/>
    <property type="match status" value="1"/>
</dbReference>
<dbReference type="Pfam" id="PF00953">
    <property type="entry name" value="Glycos_transf_4"/>
    <property type="match status" value="1"/>
</dbReference>
<dbReference type="Pfam" id="PF10555">
    <property type="entry name" value="MraY_sig1"/>
    <property type="match status" value="1"/>
</dbReference>
<dbReference type="PROSITE" id="PS01348">
    <property type="entry name" value="MRAY_2"/>
    <property type="match status" value="1"/>
</dbReference>
<feature type="chain" id="PRO_1000003079" description="Phospho-N-acetylmuramoyl-pentapeptide-transferase">
    <location>
        <begin position="1"/>
        <end position="327"/>
    </location>
</feature>
<feature type="transmembrane region" description="Helical" evidence="1">
    <location>
        <begin position="3"/>
        <end position="23"/>
    </location>
</feature>
<feature type="transmembrane region" description="Helical" evidence="1">
    <location>
        <begin position="51"/>
        <end position="71"/>
    </location>
</feature>
<feature type="transmembrane region" description="Helical" evidence="1">
    <location>
        <begin position="75"/>
        <end position="95"/>
    </location>
</feature>
<feature type="transmembrane region" description="Helical" evidence="1">
    <location>
        <begin position="115"/>
        <end position="135"/>
    </location>
</feature>
<feature type="transmembrane region" description="Helical" evidence="1">
    <location>
        <begin position="140"/>
        <end position="160"/>
    </location>
</feature>
<feature type="transmembrane region" description="Helical" evidence="1">
    <location>
        <begin position="172"/>
        <end position="192"/>
    </location>
</feature>
<feature type="transmembrane region" description="Helical" evidence="1">
    <location>
        <begin position="197"/>
        <end position="217"/>
    </location>
</feature>
<feature type="transmembrane region" description="Helical" evidence="1">
    <location>
        <begin position="223"/>
        <end position="243"/>
    </location>
</feature>
<feature type="transmembrane region" description="Helical" evidence="1">
    <location>
        <begin position="248"/>
        <end position="268"/>
    </location>
</feature>
<feature type="transmembrane region" description="Helical" evidence="1">
    <location>
        <begin position="306"/>
        <end position="326"/>
    </location>
</feature>
<protein>
    <recommendedName>
        <fullName evidence="1">Phospho-N-acetylmuramoyl-pentapeptide-transferase</fullName>
        <ecNumber evidence="1">2.7.8.13</ecNumber>
    </recommendedName>
    <alternativeName>
        <fullName evidence="1">UDP-MurNAc-pentapeptide phosphotransferase</fullName>
    </alternativeName>
</protein>
<accession>A3CPZ6</accession>
<proteinExistence type="inferred from homology"/>
<name>MRAY_STRSV</name>
<gene>
    <name evidence="1" type="primary">mraY</name>
    <name type="ordered locus">SSA_1870</name>
</gene>
<organism>
    <name type="scientific">Streptococcus sanguinis (strain SK36)</name>
    <dbReference type="NCBI Taxonomy" id="388919"/>
    <lineage>
        <taxon>Bacteria</taxon>
        <taxon>Bacillati</taxon>
        <taxon>Bacillota</taxon>
        <taxon>Bacilli</taxon>
        <taxon>Lactobacillales</taxon>
        <taxon>Streptococcaceae</taxon>
        <taxon>Streptococcus</taxon>
    </lineage>
</organism>
<evidence type="ECO:0000255" key="1">
    <source>
        <dbReference type="HAMAP-Rule" id="MF_00038"/>
    </source>
</evidence>
<sequence length="327" mass="36266">MLIALIAGIVTFILTIIGIPAFIRFYHKARITGQQMHEDVKQHQAKAGTPTMGGTVFLLTSVLASFVIGLFSHQLSNGLIMILFILVLYGVVGFLDDFLKVFRKINEGLNPKQKLFLQLVGGVVFYFFYNQHGAGDQLNIFTVPVQLGFLYVFFVLFWLIGFSNAVNLTDGIDGLASISVVISLVAYAVIAVEQKRFDILIVIISMIGGLLGFFVFNHKPAKIFMGDVGSLALGGMLAAISISLHQEWTLLLIGIVYVFETTSVMMQVTYFKLTGGKRIFRMTPVHHHFELGGLTGHGKEWSEWKVDFFFWGIGIVGSLLTLAILYL</sequence>